<accession>P31053</accession>
<dbReference type="EMBL" id="X53517">
    <property type="protein sequence ID" value="CAA37596.1"/>
    <property type="molecule type" value="mRNA"/>
</dbReference>
<dbReference type="EMBL" id="BC059144">
    <property type="protein sequence ID" value="AAH59144.1"/>
    <property type="molecule type" value="mRNA"/>
</dbReference>
<dbReference type="PIR" id="B47629">
    <property type="entry name" value="B47629"/>
</dbReference>
<dbReference type="RefSeq" id="NP_058820.1">
    <property type="nucleotide sequence ID" value="NM_017124.1"/>
</dbReference>
<dbReference type="SMR" id="P31053"/>
<dbReference type="FunCoup" id="P31053">
    <property type="interactions" value="346"/>
</dbReference>
<dbReference type="STRING" id="10116.ENSRNOP00000059092"/>
<dbReference type="GlyCosmos" id="P31053">
    <property type="glycosylation" value="3 sites, No reported glycans"/>
</dbReference>
<dbReference type="GlyGen" id="P31053">
    <property type="glycosylation" value="3 sites"/>
</dbReference>
<dbReference type="PhosphoSitePlus" id="P31053"/>
<dbReference type="PaxDb" id="10116-ENSRNOP00000059092"/>
<dbReference type="GeneID" id="29185"/>
<dbReference type="KEGG" id="rno:29185"/>
<dbReference type="UCSC" id="RGD:62035">
    <property type="organism name" value="rat"/>
</dbReference>
<dbReference type="AGR" id="RGD:62035"/>
<dbReference type="CTD" id="951"/>
<dbReference type="RGD" id="62035">
    <property type="gene designation" value="Cd37"/>
</dbReference>
<dbReference type="eggNOG" id="KOG3882">
    <property type="taxonomic scope" value="Eukaryota"/>
</dbReference>
<dbReference type="HOGENOM" id="CLU_055524_2_0_1"/>
<dbReference type="InParanoid" id="P31053"/>
<dbReference type="PhylomeDB" id="P31053"/>
<dbReference type="PRO" id="PR:P31053"/>
<dbReference type="Proteomes" id="UP000002494">
    <property type="component" value="Unplaced"/>
</dbReference>
<dbReference type="GO" id="GO:0001772">
    <property type="term" value="C:immunological synapse"/>
    <property type="evidence" value="ECO:0000266"/>
    <property type="project" value="RGD"/>
</dbReference>
<dbReference type="GO" id="GO:0005886">
    <property type="term" value="C:plasma membrane"/>
    <property type="evidence" value="ECO:0000318"/>
    <property type="project" value="GO_Central"/>
</dbReference>
<dbReference type="GO" id="GO:0042832">
    <property type="term" value="P:defense response to protozoan"/>
    <property type="evidence" value="ECO:0000266"/>
    <property type="project" value="RGD"/>
</dbReference>
<dbReference type="GO" id="GO:0030886">
    <property type="term" value="P:negative regulation of myeloid dendritic cell activation"/>
    <property type="evidence" value="ECO:0000266"/>
    <property type="project" value="RGD"/>
</dbReference>
<dbReference type="GO" id="GO:0042130">
    <property type="term" value="P:negative regulation of T cell proliferation"/>
    <property type="evidence" value="ECO:0000266"/>
    <property type="project" value="RGD"/>
</dbReference>
<dbReference type="GO" id="GO:0002639">
    <property type="term" value="P:positive regulation of immunoglobulin production"/>
    <property type="evidence" value="ECO:0000266"/>
    <property type="project" value="RGD"/>
</dbReference>
<dbReference type="GO" id="GO:0050688">
    <property type="term" value="P:regulation of defense response to virus"/>
    <property type="evidence" value="ECO:0000266"/>
    <property type="project" value="RGD"/>
</dbReference>
<dbReference type="GO" id="GO:0002920">
    <property type="term" value="P:regulation of humoral immune response"/>
    <property type="evidence" value="ECO:0000266"/>
    <property type="project" value="RGD"/>
</dbReference>
<dbReference type="GO" id="GO:0042098">
    <property type="term" value="P:T cell proliferation"/>
    <property type="evidence" value="ECO:0000266"/>
    <property type="project" value="RGD"/>
</dbReference>
<dbReference type="CDD" id="cd03160">
    <property type="entry name" value="CD37_CD82_like_LEL"/>
    <property type="match status" value="1"/>
</dbReference>
<dbReference type="FunFam" id="1.10.1450.10:FF:000018">
    <property type="entry name" value="Tetraspanin"/>
    <property type="match status" value="1"/>
</dbReference>
<dbReference type="Gene3D" id="1.10.1450.10">
    <property type="entry name" value="Tetraspanin"/>
    <property type="match status" value="1"/>
</dbReference>
<dbReference type="InterPro" id="IPR018499">
    <property type="entry name" value="Tetraspanin/Peripherin"/>
</dbReference>
<dbReference type="InterPro" id="IPR000301">
    <property type="entry name" value="Tetraspanin_animals"/>
</dbReference>
<dbReference type="InterPro" id="IPR018503">
    <property type="entry name" value="Tetraspanin_CS"/>
</dbReference>
<dbReference type="InterPro" id="IPR008952">
    <property type="entry name" value="Tetraspanin_EC2_sf"/>
</dbReference>
<dbReference type="PANTHER" id="PTHR19282:SF263">
    <property type="entry name" value="LEUKOCYTE ANTIGEN CD37"/>
    <property type="match status" value="1"/>
</dbReference>
<dbReference type="PANTHER" id="PTHR19282">
    <property type="entry name" value="TETRASPANIN"/>
    <property type="match status" value="1"/>
</dbReference>
<dbReference type="Pfam" id="PF00335">
    <property type="entry name" value="Tetraspanin"/>
    <property type="match status" value="1"/>
</dbReference>
<dbReference type="PIRSF" id="PIRSF002419">
    <property type="entry name" value="Tetraspanin"/>
    <property type="match status" value="1"/>
</dbReference>
<dbReference type="PRINTS" id="PR00259">
    <property type="entry name" value="TMFOUR"/>
</dbReference>
<dbReference type="SUPFAM" id="SSF48652">
    <property type="entry name" value="Tetraspanin"/>
    <property type="match status" value="1"/>
</dbReference>
<dbReference type="PROSITE" id="PS00421">
    <property type="entry name" value="TM4_1"/>
    <property type="match status" value="1"/>
</dbReference>
<organism>
    <name type="scientific">Rattus norvegicus</name>
    <name type="common">Rat</name>
    <dbReference type="NCBI Taxonomy" id="10116"/>
    <lineage>
        <taxon>Eukaryota</taxon>
        <taxon>Metazoa</taxon>
        <taxon>Chordata</taxon>
        <taxon>Craniata</taxon>
        <taxon>Vertebrata</taxon>
        <taxon>Euteleostomi</taxon>
        <taxon>Mammalia</taxon>
        <taxon>Eutheria</taxon>
        <taxon>Euarchontoglires</taxon>
        <taxon>Glires</taxon>
        <taxon>Rodentia</taxon>
        <taxon>Myomorpha</taxon>
        <taxon>Muroidea</taxon>
        <taxon>Muridae</taxon>
        <taxon>Murinae</taxon>
        <taxon>Rattus</taxon>
    </lineage>
</organism>
<protein>
    <recommendedName>
        <fullName>Leukocyte antigen CD37</fullName>
    </recommendedName>
    <cdAntigenName>CD37</cdAntigenName>
</protein>
<feature type="chain" id="PRO_0000219211" description="Leukocyte antigen CD37">
    <location>
        <begin position="1"/>
        <end position="281"/>
    </location>
</feature>
<feature type="topological domain" description="Cytoplasmic" evidence="3">
    <location>
        <begin position="1"/>
        <end position="17"/>
    </location>
</feature>
<feature type="transmembrane region" description="Helical" evidence="3">
    <location>
        <begin position="18"/>
        <end position="38"/>
    </location>
</feature>
<feature type="topological domain" description="Extracellular" evidence="3">
    <location>
        <begin position="39"/>
        <end position="59"/>
    </location>
</feature>
<feature type="transmembrane region" description="Helical" evidence="3">
    <location>
        <begin position="60"/>
        <end position="74"/>
    </location>
</feature>
<feature type="topological domain" description="Cytoplasmic" evidence="3">
    <location>
        <begin position="75"/>
        <end position="85"/>
    </location>
</feature>
<feature type="transmembrane region" description="Helical" evidence="3">
    <location>
        <begin position="86"/>
        <end position="111"/>
    </location>
</feature>
<feature type="topological domain" description="Extracellular" evidence="3">
    <location>
        <begin position="112"/>
        <end position="241"/>
    </location>
</feature>
<feature type="transmembrane region" description="Helical" evidence="3">
    <location>
        <begin position="242"/>
        <end position="266"/>
    </location>
</feature>
<feature type="topological domain" description="Cytoplasmic" evidence="3">
    <location>
        <begin position="267"/>
        <end position="281"/>
    </location>
</feature>
<feature type="glycosylation site" description="N-linked (GlcNAc...) asparagine" evidence="3">
    <location>
        <position position="170"/>
    </location>
</feature>
<feature type="glycosylation site" description="N-linked (GlcNAc...) asparagine" evidence="3">
    <location>
        <position position="183"/>
    </location>
</feature>
<feature type="glycosylation site" description="N-linked (GlcNAc...) asparagine" evidence="3">
    <location>
        <position position="188"/>
    </location>
</feature>
<comment type="function">
    <text evidence="1 2">Structural component of specialized membrane microdomains known as tetraspanin-enriched microdomains (TERMs), which act as platforms for receptor clustering and signaling. Participates thereby in diverse biological functions such as cell signal transduction, adhesion, migration and protein trafficking. Upon ligand binding, two signaling pathways are activated, one acting through phosphorylation by LYN leading to cell death or a survival pathway with activation of GSK3B (By similarity). Plays an essential role essential for clustering of integrin ITGA4/ITGB1 and promotes its mobility in the plasma membrane of B-cells. In turn, participates in ITGA4/ITGB1 integrin-mediated antiapoptotic signaling through AKT (By similarity). Plays also a role in the migration of dendritic cells and neutrophils to draining lymph nodes, as well as in their integrin-mediated adhesion (By similarity). Negatively regulates IL-6 responses through direct interaction with SOCS3 thereby preventing constitutive IL-6 signaling. Alternatively, inhibition of IL-6 signaling can also occur via interaction and stabilization of DECTIN1/CLEC7A at the cell membrane to inhibit its ability to promote the production of IL-6 (By similarity).</text>
</comment>
<comment type="subunit">
    <text evidence="1">Interacts with SCIMP. Interacts with SOCS3. Interacts with DECTIN1/CLEC7A.</text>
</comment>
<comment type="subcellular location">
    <subcellularLocation>
        <location evidence="1">Cell membrane</location>
        <topology evidence="1">Multi-pass membrane protein</topology>
    </subcellularLocation>
</comment>
<comment type="tissue specificity">
    <text>B-lymphocytes.</text>
</comment>
<comment type="PTM">
    <text evidence="1">Tyrosine phosphorylated; leading to activation of downstream signaling pathways.</text>
</comment>
<comment type="similarity">
    <text evidence="4">Belongs to the tetraspanin (TM4SF) family.</text>
</comment>
<sequence>MSAQESCLSLIKYFLFVFNLFFFVLGGLIFCFGTWILIDKTSFVSFVGLSFVPLQTWSKVLSVSGVLTMALALLGCVGALKELRCLLGLYFGMLLLLFATQITLGILISTQRVRLERRVQELVLRTIQSYRTNPDETAAEESWDYAQFQLRCCGWQSPRDWNKAQMLKANGSEELFVPCSCYNSTATNDSSGFDKLFLSQLSRLGPRAKLRQTADICALPAKAHIYREGCARSLQKWLHNNIISIVGICLGVGLLELGFMTLSIFLCRNLDHVYDRLARYR</sequence>
<evidence type="ECO:0000250" key="1">
    <source>
        <dbReference type="UniProtKB" id="P11049"/>
    </source>
</evidence>
<evidence type="ECO:0000250" key="2">
    <source>
        <dbReference type="UniProtKB" id="Q61451"/>
    </source>
</evidence>
<evidence type="ECO:0000255" key="3"/>
<evidence type="ECO:0000305" key="4"/>
<proteinExistence type="evidence at transcript level"/>
<reference key="1">
    <citation type="journal article" date="1989" name="J. Exp. Med.">
        <title>The primary structure of the human leukocyte antigen CD37, a species homologue of the rat MRC OX-44 antigen.</title>
        <authorList>
            <person name="Classon B.J."/>
            <person name="Williams A.F."/>
            <person name="Willis A.C."/>
            <person name="Seed B."/>
            <person name="Stamenkovic I."/>
        </authorList>
    </citation>
    <scope>NUCLEOTIDE SEQUENCE [MRNA]</scope>
    <source>
        <strain>PVG X DA</strain>
    </source>
</reference>
<reference key="2">
    <citation type="journal article" date="1990" name="J. Exp. Med.">
        <authorList>
            <person name="Classon B.J."/>
            <person name="Williams A.F."/>
            <person name="Willis A.C."/>
            <person name="Seed B."/>
            <person name="Stamenkovic I."/>
        </authorList>
    </citation>
    <scope>ERRATUM OF PUBMED:2466944</scope>
</reference>
<reference key="3">
    <citation type="journal article" date="2004" name="Genome Res.">
        <title>The status, quality, and expansion of the NIH full-length cDNA project: the Mammalian Gene Collection (MGC).</title>
        <authorList>
            <consortium name="The MGC Project Team"/>
        </authorList>
    </citation>
    <scope>NUCLEOTIDE SEQUENCE [LARGE SCALE MRNA]</scope>
    <source>
        <tissue>Pituitary</tissue>
    </source>
</reference>
<gene>
    <name type="primary">Cd37</name>
</gene>
<name>CD37_RAT</name>
<keyword id="KW-1003">Cell membrane</keyword>
<keyword id="KW-0325">Glycoprotein</keyword>
<keyword id="KW-0472">Membrane</keyword>
<keyword id="KW-1185">Reference proteome</keyword>
<keyword id="KW-0812">Transmembrane</keyword>
<keyword id="KW-1133">Transmembrane helix</keyword>